<evidence type="ECO:0000255" key="1">
    <source>
        <dbReference type="HAMAP-Rule" id="MF_01625"/>
    </source>
</evidence>
<proteinExistence type="inferred from homology"/>
<keyword id="KW-0067">ATP-binding</keyword>
<keyword id="KW-0143">Chaperone</keyword>
<keyword id="KW-0963">Cytoplasm</keyword>
<keyword id="KW-0378">Hydrolase</keyword>
<keyword id="KW-0547">Nucleotide-binding</keyword>
<reference key="1">
    <citation type="journal article" date="2008" name="Genome Res.">
        <title>Comparative genome analysis of Salmonella enteritidis PT4 and Salmonella gallinarum 287/91 provides insights into evolutionary and host adaptation pathways.</title>
        <authorList>
            <person name="Thomson N.R."/>
            <person name="Clayton D.J."/>
            <person name="Windhorst D."/>
            <person name="Vernikos G."/>
            <person name="Davidson S."/>
            <person name="Churcher C."/>
            <person name="Quail M.A."/>
            <person name="Stevens M."/>
            <person name="Jones M.A."/>
            <person name="Watson M."/>
            <person name="Barron A."/>
            <person name="Layton A."/>
            <person name="Pickard D."/>
            <person name="Kingsley R.A."/>
            <person name="Bignell A."/>
            <person name="Clark L."/>
            <person name="Harris B."/>
            <person name="Ormond D."/>
            <person name="Abdellah Z."/>
            <person name="Brooks K."/>
            <person name="Cherevach I."/>
            <person name="Chillingworth T."/>
            <person name="Woodward J."/>
            <person name="Norberczak H."/>
            <person name="Lord A."/>
            <person name="Arrowsmith C."/>
            <person name="Jagels K."/>
            <person name="Moule S."/>
            <person name="Mungall K."/>
            <person name="Saunders M."/>
            <person name="Whitehead S."/>
            <person name="Chabalgoity J.A."/>
            <person name="Maskell D."/>
            <person name="Humphreys T."/>
            <person name="Roberts M."/>
            <person name="Barrow P.A."/>
            <person name="Dougan G."/>
            <person name="Parkhill J."/>
        </authorList>
    </citation>
    <scope>NUCLEOTIDE SEQUENCE [LARGE SCALE GENOMIC DNA]</scope>
    <source>
        <strain>287/91 / NCTC 13346</strain>
    </source>
</reference>
<dbReference type="EC" id="3.6.1.-" evidence="1"/>
<dbReference type="EMBL" id="AM933173">
    <property type="protein sequence ID" value="CAR39343.1"/>
    <property type="molecule type" value="Genomic_DNA"/>
</dbReference>
<dbReference type="RefSeq" id="WP_000940970.1">
    <property type="nucleotide sequence ID" value="NC_011274.1"/>
</dbReference>
<dbReference type="SMR" id="B5RFU9"/>
<dbReference type="KEGG" id="seg:SG3554"/>
<dbReference type="HOGENOM" id="CLU_018678_1_0_6"/>
<dbReference type="Proteomes" id="UP000008321">
    <property type="component" value="Chromosome"/>
</dbReference>
<dbReference type="GO" id="GO:0005737">
    <property type="term" value="C:cytoplasm"/>
    <property type="evidence" value="ECO:0007669"/>
    <property type="project" value="UniProtKB-SubCell"/>
</dbReference>
<dbReference type="GO" id="GO:0005524">
    <property type="term" value="F:ATP binding"/>
    <property type="evidence" value="ECO:0007669"/>
    <property type="project" value="UniProtKB-KW"/>
</dbReference>
<dbReference type="GO" id="GO:0016887">
    <property type="term" value="F:ATP hydrolysis activity"/>
    <property type="evidence" value="ECO:0007669"/>
    <property type="project" value="UniProtKB-UniRule"/>
</dbReference>
<dbReference type="CDD" id="cd00009">
    <property type="entry name" value="AAA"/>
    <property type="match status" value="1"/>
</dbReference>
<dbReference type="FunFam" id="3.40.50.300:FF:000410">
    <property type="entry name" value="ATPase RavA"/>
    <property type="match status" value="1"/>
</dbReference>
<dbReference type="Gene3D" id="1.20.58.1510">
    <property type="match status" value="1"/>
</dbReference>
<dbReference type="Gene3D" id="2.40.128.430">
    <property type="match status" value="1"/>
</dbReference>
<dbReference type="Gene3D" id="3.40.50.300">
    <property type="entry name" value="P-loop containing nucleotide triphosphate hydrolases"/>
    <property type="match status" value="1"/>
</dbReference>
<dbReference type="HAMAP" id="MF_01625">
    <property type="entry name" value="ATPase_RavA"/>
    <property type="match status" value="1"/>
</dbReference>
<dbReference type="InterPro" id="IPR003593">
    <property type="entry name" value="AAA+_ATPase"/>
</dbReference>
<dbReference type="InterPro" id="IPR023671">
    <property type="entry name" value="ATPase_RavA"/>
</dbReference>
<dbReference type="InterPro" id="IPR022547">
    <property type="entry name" value="ATPase_RavA_C"/>
</dbReference>
<dbReference type="InterPro" id="IPR045427">
    <property type="entry name" value="MoxR"/>
</dbReference>
<dbReference type="InterPro" id="IPR027417">
    <property type="entry name" value="P-loop_NTPase"/>
</dbReference>
<dbReference type="InterPro" id="IPR041538">
    <property type="entry name" value="RavA-like_AAA_lid"/>
</dbReference>
<dbReference type="InterPro" id="IPR050513">
    <property type="entry name" value="RavA_ATPases"/>
</dbReference>
<dbReference type="InterPro" id="IPR046898">
    <property type="entry name" value="RavA_LARA_dom"/>
</dbReference>
<dbReference type="InterPro" id="IPR046932">
    <property type="entry name" value="RavA_LARA_sf"/>
</dbReference>
<dbReference type="NCBIfam" id="NF010054">
    <property type="entry name" value="PRK13531.1"/>
    <property type="match status" value="1"/>
</dbReference>
<dbReference type="PANTHER" id="PTHR32204">
    <property type="entry name" value="ATPASE RAVA"/>
    <property type="match status" value="1"/>
</dbReference>
<dbReference type="PANTHER" id="PTHR32204:SF0">
    <property type="entry name" value="ATPASE RAVA"/>
    <property type="match status" value="1"/>
</dbReference>
<dbReference type="Pfam" id="PF17868">
    <property type="entry name" value="AAA_lid_8"/>
    <property type="match status" value="1"/>
</dbReference>
<dbReference type="Pfam" id="PF12592">
    <property type="entry name" value="ATPase_RavA_C"/>
    <property type="match status" value="1"/>
</dbReference>
<dbReference type="Pfam" id="PF20030">
    <property type="entry name" value="bpMoxR"/>
    <property type="match status" value="1"/>
</dbReference>
<dbReference type="Pfam" id="PF20265">
    <property type="entry name" value="LARA_dom"/>
    <property type="match status" value="1"/>
</dbReference>
<dbReference type="SMART" id="SM00382">
    <property type="entry name" value="AAA"/>
    <property type="match status" value="1"/>
</dbReference>
<dbReference type="SUPFAM" id="SSF52540">
    <property type="entry name" value="P-loop containing nucleoside triphosphate hydrolases"/>
    <property type="match status" value="1"/>
</dbReference>
<accession>B5RFU9</accession>
<comment type="function">
    <text evidence="1">Component of the RavA-ViaA chaperone complex, which may act on the membrane to optimize the function of some of the respiratory chains. RavA functions as an ATPase.</text>
</comment>
<comment type="catalytic activity">
    <reaction evidence="1">
        <text>ATP + H2O = ADP + phosphate + H(+)</text>
        <dbReference type="Rhea" id="RHEA:13065"/>
        <dbReference type="ChEBI" id="CHEBI:15377"/>
        <dbReference type="ChEBI" id="CHEBI:15378"/>
        <dbReference type="ChEBI" id="CHEBI:30616"/>
        <dbReference type="ChEBI" id="CHEBI:43474"/>
        <dbReference type="ChEBI" id="CHEBI:456216"/>
    </reaction>
</comment>
<comment type="activity regulation">
    <text evidence="1">ATPase activity is stimulated by ViaA.</text>
</comment>
<comment type="subunit">
    <text evidence="1">Homohexamer. Interacts with ViaA.</text>
</comment>
<comment type="subcellular location">
    <subcellularLocation>
        <location evidence="1">Cytoplasm</location>
    </subcellularLocation>
</comment>
<comment type="similarity">
    <text evidence="1">Belongs to the RavA family.</text>
</comment>
<protein>
    <recommendedName>
        <fullName evidence="1">Regulatory ATPase RavA</fullName>
        <ecNumber evidence="1">3.6.1.-</ecNumber>
    </recommendedName>
    <alternativeName>
        <fullName evidence="1">Regulatory ATPase variant A</fullName>
    </alternativeName>
</protein>
<feature type="chain" id="PRO_1000186132" description="Regulatory ATPase RavA">
    <location>
        <begin position="1"/>
        <end position="498"/>
    </location>
</feature>
<feature type="binding site" evidence="1">
    <location>
        <position position="23"/>
    </location>
    <ligand>
        <name>ADP</name>
        <dbReference type="ChEBI" id="CHEBI:456216"/>
    </ligand>
</feature>
<feature type="binding site" evidence="1">
    <location>
        <position position="49"/>
    </location>
    <ligand>
        <name>ADP</name>
        <dbReference type="ChEBI" id="CHEBI:456216"/>
    </ligand>
</feature>
<feature type="binding site" evidence="1">
    <location>
        <position position="50"/>
    </location>
    <ligand>
        <name>ADP</name>
        <dbReference type="ChEBI" id="CHEBI:456216"/>
    </ligand>
</feature>
<feature type="binding site" evidence="1">
    <location>
        <position position="51"/>
    </location>
    <ligand>
        <name>ADP</name>
        <dbReference type="ChEBI" id="CHEBI:456216"/>
    </ligand>
</feature>
<feature type="binding site" evidence="1">
    <location>
        <position position="52"/>
    </location>
    <ligand>
        <name>ADP</name>
        <dbReference type="ChEBI" id="CHEBI:456216"/>
    </ligand>
</feature>
<feature type="binding site" evidence="1">
    <location>
        <position position="53"/>
    </location>
    <ligand>
        <name>ADP</name>
        <dbReference type="ChEBI" id="CHEBI:456216"/>
    </ligand>
</feature>
<feature type="binding site" evidence="1">
    <location>
        <position position="54"/>
    </location>
    <ligand>
        <name>ADP</name>
        <dbReference type="ChEBI" id="CHEBI:456216"/>
    </ligand>
</feature>
<feature type="binding site" evidence="1">
    <location>
        <position position="196"/>
    </location>
    <ligand>
        <name>ADP</name>
        <dbReference type="ChEBI" id="CHEBI:456216"/>
    </ligand>
</feature>
<organism>
    <name type="scientific">Salmonella gallinarum (strain 287/91 / NCTC 13346)</name>
    <dbReference type="NCBI Taxonomy" id="550538"/>
    <lineage>
        <taxon>Bacteria</taxon>
        <taxon>Pseudomonadati</taxon>
        <taxon>Pseudomonadota</taxon>
        <taxon>Gammaproteobacteria</taxon>
        <taxon>Enterobacterales</taxon>
        <taxon>Enterobacteriaceae</taxon>
        <taxon>Salmonella</taxon>
    </lineage>
</organism>
<sequence length="498" mass="56689">MAHPHLLAERISRLSCALEKGLYERSHAIRLCLLAALSGESVFLLGPPGIAKSLIARRLKFAFQRARAFEYLMTRFSTPEEVFGPLSIQALKDEGRYERLTTGYLPEAEIVFLDEIWKAGPAILNTLLTAINERHFRNGAFEEKIPMRLLVAASNELPEADSSLEALYDRMLIRLWLDKVQDKANFRSMLVSQQDESDNPVPASLQVSDEEYQQWQKDIGAISLPDPVFELIFTLRQQLDNLPNAPYVSDRRWKKAIRLLQASAFFSGRDAVAPIDLILLKDCLWYDAQSLNLMQQQLEILMTGHAWQQQAMLTRLGGIVQRRLQLQQQQSDKTAFTVIKEGGMFSRRPHYTLPPEASASTLTLLLQKPLKLHDMEVIHITFDRSALELWLTKGGEIRGKLNGIGFAQTLNMEVDNAQHLVVRDISLQGTRLALPGAAEDSMPAEIKQQLETLENDWRQQHTRFSEQQHCLFIHSDWLGRIEASLQDVGEQIRQAQQC</sequence>
<gene>
    <name evidence="1" type="primary">ravA</name>
    <name type="ordered locus">SG3554</name>
</gene>
<name>RAVA_SALG2</name>